<reference key="1">
    <citation type="journal article" date="2011" name="BMC Genomics">
        <title>Complete genome sequence of the filamentous anoxygenic phototrophic bacterium Chloroflexus aurantiacus.</title>
        <authorList>
            <person name="Tang K.H."/>
            <person name="Barry K."/>
            <person name="Chertkov O."/>
            <person name="Dalin E."/>
            <person name="Han C.S."/>
            <person name="Hauser L.J."/>
            <person name="Honchak B.M."/>
            <person name="Karbach L.E."/>
            <person name="Land M.L."/>
            <person name="Lapidus A."/>
            <person name="Larimer F.W."/>
            <person name="Mikhailova N."/>
            <person name="Pitluck S."/>
            <person name="Pierson B.K."/>
            <person name="Blankenship R.E."/>
        </authorList>
    </citation>
    <scope>NUCLEOTIDE SEQUENCE [LARGE SCALE GENOMIC DNA]</scope>
    <source>
        <strain>ATCC 29366 / DSM 635 / J-10-fl</strain>
    </source>
</reference>
<gene>
    <name evidence="1" type="primary">rplJ</name>
    <name type="ordered locus">Caur_2187</name>
</gene>
<protein>
    <recommendedName>
        <fullName evidence="1">Large ribosomal subunit protein uL10</fullName>
    </recommendedName>
    <alternativeName>
        <fullName evidence="2">50S ribosomal protein L10</fullName>
    </alternativeName>
</protein>
<accession>A9WFP8</accession>
<proteinExistence type="inferred from homology"/>
<keyword id="KW-1185">Reference proteome</keyword>
<keyword id="KW-0687">Ribonucleoprotein</keyword>
<keyword id="KW-0689">Ribosomal protein</keyword>
<keyword id="KW-0694">RNA-binding</keyword>
<keyword id="KW-0699">rRNA-binding</keyword>
<sequence length="182" mass="19201">MPTPRKIETVSTLTEKLNRAQLVVVADYRGDGKGMSVADMTELRRKLREHGGEVVVAKNTLLKIAAHNTGHEALDPLLAGPTAVTLGYDDVSKVAKALLDYLKSGNKSFTVRGALLGNTLLPADALEQVTKLPSREQALAQVVGGIAAPVSGVVGVLNAAISNVLYVLQARIDQLQPQGETA</sequence>
<evidence type="ECO:0000255" key="1">
    <source>
        <dbReference type="HAMAP-Rule" id="MF_00362"/>
    </source>
</evidence>
<evidence type="ECO:0000305" key="2"/>
<dbReference type="EMBL" id="CP000909">
    <property type="protein sequence ID" value="ABY35398.1"/>
    <property type="molecule type" value="Genomic_DNA"/>
</dbReference>
<dbReference type="RefSeq" id="WP_012258052.1">
    <property type="nucleotide sequence ID" value="NC_010175.1"/>
</dbReference>
<dbReference type="RefSeq" id="YP_001635787.1">
    <property type="nucleotide sequence ID" value="NC_010175.1"/>
</dbReference>
<dbReference type="SMR" id="A9WFP8"/>
<dbReference type="FunCoup" id="A9WFP8">
    <property type="interactions" value="466"/>
</dbReference>
<dbReference type="STRING" id="324602.Caur_2187"/>
<dbReference type="EnsemblBacteria" id="ABY35398">
    <property type="protein sequence ID" value="ABY35398"/>
    <property type="gene ID" value="Caur_2187"/>
</dbReference>
<dbReference type="KEGG" id="cau:Caur_2187"/>
<dbReference type="PATRIC" id="fig|324602.8.peg.2474"/>
<dbReference type="eggNOG" id="COG0244">
    <property type="taxonomic scope" value="Bacteria"/>
</dbReference>
<dbReference type="HOGENOM" id="CLU_092227_1_2_0"/>
<dbReference type="InParanoid" id="A9WFP8"/>
<dbReference type="Proteomes" id="UP000002008">
    <property type="component" value="Chromosome"/>
</dbReference>
<dbReference type="GO" id="GO:0022625">
    <property type="term" value="C:cytosolic large ribosomal subunit"/>
    <property type="evidence" value="ECO:0000318"/>
    <property type="project" value="GO_Central"/>
</dbReference>
<dbReference type="GO" id="GO:0070180">
    <property type="term" value="F:large ribosomal subunit rRNA binding"/>
    <property type="evidence" value="ECO:0007669"/>
    <property type="project" value="UniProtKB-UniRule"/>
</dbReference>
<dbReference type="GO" id="GO:0003735">
    <property type="term" value="F:structural constituent of ribosome"/>
    <property type="evidence" value="ECO:0000318"/>
    <property type="project" value="GO_Central"/>
</dbReference>
<dbReference type="GO" id="GO:0006412">
    <property type="term" value="P:translation"/>
    <property type="evidence" value="ECO:0000318"/>
    <property type="project" value="GO_Central"/>
</dbReference>
<dbReference type="CDD" id="cd05797">
    <property type="entry name" value="Ribosomal_L10"/>
    <property type="match status" value="1"/>
</dbReference>
<dbReference type="Gene3D" id="3.30.70.1730">
    <property type="match status" value="1"/>
</dbReference>
<dbReference type="Gene3D" id="6.10.250.290">
    <property type="match status" value="1"/>
</dbReference>
<dbReference type="HAMAP" id="MF_00362">
    <property type="entry name" value="Ribosomal_uL10"/>
    <property type="match status" value="1"/>
</dbReference>
<dbReference type="InterPro" id="IPR001790">
    <property type="entry name" value="Ribosomal_uL10"/>
</dbReference>
<dbReference type="InterPro" id="IPR043141">
    <property type="entry name" value="Ribosomal_uL10-like_sf"/>
</dbReference>
<dbReference type="InterPro" id="IPR022973">
    <property type="entry name" value="Ribosomal_uL10_bac"/>
</dbReference>
<dbReference type="InterPro" id="IPR047865">
    <property type="entry name" value="Ribosomal_uL10_bac_type"/>
</dbReference>
<dbReference type="NCBIfam" id="NF000955">
    <property type="entry name" value="PRK00099.1-1"/>
    <property type="match status" value="1"/>
</dbReference>
<dbReference type="PANTHER" id="PTHR11560">
    <property type="entry name" value="39S RIBOSOMAL PROTEIN L10, MITOCHONDRIAL"/>
    <property type="match status" value="1"/>
</dbReference>
<dbReference type="Pfam" id="PF00466">
    <property type="entry name" value="Ribosomal_L10"/>
    <property type="match status" value="1"/>
</dbReference>
<dbReference type="SUPFAM" id="SSF160369">
    <property type="entry name" value="Ribosomal protein L10-like"/>
    <property type="match status" value="1"/>
</dbReference>
<comment type="function">
    <text evidence="1">Forms part of the ribosomal stalk, playing a central role in the interaction of the ribosome with GTP-bound translation factors.</text>
</comment>
<comment type="subunit">
    <text evidence="1">Part of the ribosomal stalk of the 50S ribosomal subunit. The N-terminus interacts with L11 and the large rRNA to form the base of the stalk. The C-terminus forms an elongated spine to which L12 dimers bind in a sequential fashion forming a multimeric L10(L12)X complex.</text>
</comment>
<comment type="similarity">
    <text evidence="1">Belongs to the universal ribosomal protein uL10 family.</text>
</comment>
<feature type="chain" id="PRO_1000079537" description="Large ribosomal subunit protein uL10">
    <location>
        <begin position="1"/>
        <end position="182"/>
    </location>
</feature>
<name>RL10_CHLAA</name>
<organism>
    <name type="scientific">Chloroflexus aurantiacus (strain ATCC 29366 / DSM 635 / J-10-fl)</name>
    <dbReference type="NCBI Taxonomy" id="324602"/>
    <lineage>
        <taxon>Bacteria</taxon>
        <taxon>Bacillati</taxon>
        <taxon>Chloroflexota</taxon>
        <taxon>Chloroflexia</taxon>
        <taxon>Chloroflexales</taxon>
        <taxon>Chloroflexineae</taxon>
        <taxon>Chloroflexaceae</taxon>
        <taxon>Chloroflexus</taxon>
    </lineage>
</organism>